<comment type="function">
    <text evidence="2">Component of neuronal acetylcholine receptors (nAChRs) that function as pentameric, ligand-gated cation channels with high calcium permeability among other activities. nAChRs are excitatory neurotrasnmitter receptors formed by a collection of nAChR subunits known to mediate synaptic transmission in the nervous system and the neuromuscular junction. Each nAchR subunit confers differential attributes to channel properties, including activation, deactivation and desensitization kinetics, pH sensitivity, cation permeability, and binding to allosteric modulators. Has an accessory rather than functional role and is only able to form functional nAChRs when co-assembled with another beta subunit. Participates in pentameric assemblies along with CHRNA3, CHRNA4, CHRNB2 and CHRNB4. Increases receptor sensitivity to acetylcholine and nicotine when associated with CHRNA4 and CHRNB2. Plays a role in nicotine addiction.</text>
</comment>
<comment type="catalytic activity">
    <reaction evidence="2">
        <text>Ca(2+)(in) = Ca(2+)(out)</text>
        <dbReference type="Rhea" id="RHEA:29671"/>
        <dbReference type="ChEBI" id="CHEBI:29108"/>
    </reaction>
</comment>
<comment type="catalytic activity">
    <reaction evidence="1">
        <text>K(+)(in) = K(+)(out)</text>
        <dbReference type="Rhea" id="RHEA:29463"/>
        <dbReference type="ChEBI" id="CHEBI:29103"/>
    </reaction>
</comment>
<comment type="catalytic activity">
    <reaction evidence="4">
        <text>Na(+)(in) = Na(+)(out)</text>
        <dbReference type="Rhea" id="RHEA:34963"/>
        <dbReference type="ChEBI" id="CHEBI:29101"/>
    </reaction>
</comment>
<comment type="activity regulation">
    <text evidence="2">Activated by a myriad of ligands such as acetylcholine, cytisine, nicotine, choline and epibatidine.</text>
</comment>
<comment type="subunit">
    <text evidence="2">Neuronal AChR that forms heteropentamers composed of two different type of subunits: alpha and non-alpha (beta). CHRNA5/alpha-5 subunit is only able to form functional nAChRs when co-assembled with another alpha subunit, can be combined to CHRNA4/alpha-4 or CHRNA3/alpha-3 and CHRNB4/beta-4 or CHRNB2/beta-2 to give rise to functional receptors. Interacts with LYPD6.</text>
</comment>
<comment type="interaction">
    <interactant intactId="EBI-10686157">
        <id>P26152</id>
    </interactant>
    <interactant intactId="EBI-10686072">
        <id>P09484</id>
        <label>CHRNB2</label>
    </interactant>
    <organismsDiffer>false</organismsDiffer>
    <experiments>8</experiments>
</comment>
<comment type="interaction">
    <interactant intactId="EBI-10686157">
        <id>P26152</id>
    </interactant>
    <interactant intactId="EBI-10686176">
        <id>P26153</id>
        <label>CHRNB4</label>
    </interactant>
    <organismsDiffer>false</organismsDiffer>
    <experiments>4</experiments>
</comment>
<comment type="subcellular location">
    <subcellularLocation>
        <location evidence="3">Synaptic cell membrane</location>
        <topology evidence="5">Multi-pass membrane protein</topology>
    </subcellularLocation>
    <subcellularLocation>
        <location evidence="3">Cell membrane</location>
        <topology evidence="5">Multi-pass membrane protein</topology>
    </subcellularLocation>
</comment>
<comment type="similarity">
    <text evidence="7">Belongs to the ligand-gated ion channel (TC 1.A.9) family. Acetylcholine receptor (TC 1.A.9.1) subfamily. Alpha-5/CHRNA5 sub-subfamily.</text>
</comment>
<evidence type="ECO:0000250" key="1">
    <source>
        <dbReference type="UniProtKB" id="P02709"/>
    </source>
</evidence>
<evidence type="ECO:0000250" key="2">
    <source>
        <dbReference type="UniProtKB" id="P30532"/>
    </source>
</evidence>
<evidence type="ECO:0000250" key="3">
    <source>
        <dbReference type="UniProtKB" id="P32297"/>
    </source>
</evidence>
<evidence type="ECO:0000250" key="4">
    <source>
        <dbReference type="UniProtKB" id="P43681"/>
    </source>
</evidence>
<evidence type="ECO:0000255" key="5"/>
<evidence type="ECO:0000256" key="6">
    <source>
        <dbReference type="SAM" id="MobiDB-lite"/>
    </source>
</evidence>
<evidence type="ECO:0000305" key="7"/>
<reference key="1">
    <citation type="journal article" date="1990" name="J. Biol. Chem.">
        <title>Alpha 5, alpha 3, and non-alpha 3. Three clustered avian genes encoding neuronal nicotinic acetylcholine receptor-related subunits.</title>
        <authorList>
            <person name="Couturier S."/>
            <person name="Erkman L."/>
            <person name="Valera S."/>
            <person name="Rungger D."/>
            <person name="Bertrand S."/>
            <person name="Boulter J."/>
            <person name="Ballivet M."/>
            <person name="Bertrand D."/>
        </authorList>
    </citation>
    <scope>NUCLEOTIDE SEQUENCE [MRNA]</scope>
    <source>
        <strain>White leghorn</strain>
        <tissue>Brain</tissue>
    </source>
</reference>
<dbReference type="EMBL" id="J05642">
    <property type="protein sequence ID" value="AAA48560.1"/>
    <property type="molecule type" value="mRNA"/>
</dbReference>
<dbReference type="PIR" id="B39218">
    <property type="entry name" value="B39218"/>
</dbReference>
<dbReference type="RefSeq" id="NP_989746.1">
    <property type="nucleotide sequence ID" value="NM_204415.1"/>
</dbReference>
<dbReference type="SMR" id="P26152"/>
<dbReference type="ComplexPortal" id="CPX-192">
    <property type="entry name" value="Neuronal nicotinic acetylcholine receptor complex, alpha3-alpha5-beta2"/>
</dbReference>
<dbReference type="ComplexPortal" id="CPX-207">
    <property type="entry name" value="Neuronal nicotinic acetylcholine receptor complex, alpha3-alpha5-beta4"/>
</dbReference>
<dbReference type="ComplexPortal" id="CPX-217">
    <property type="entry name" value="Neuronal nicotinic acetylcholine receptor complex, alpha4-alpha5-beta2"/>
</dbReference>
<dbReference type="FunCoup" id="P26152">
    <property type="interactions" value="66"/>
</dbReference>
<dbReference type="IntAct" id="P26152">
    <property type="interactions" value="4"/>
</dbReference>
<dbReference type="STRING" id="9031.ENSGALP00000004767"/>
<dbReference type="GlyCosmos" id="P26152">
    <property type="glycosylation" value="3 sites, No reported glycans"/>
</dbReference>
<dbReference type="GlyGen" id="P26152">
    <property type="glycosylation" value="3 sites"/>
</dbReference>
<dbReference type="PaxDb" id="9031-ENSGALP00000004767"/>
<dbReference type="GeneID" id="386577"/>
<dbReference type="KEGG" id="gga:386577"/>
<dbReference type="CTD" id="1138"/>
<dbReference type="VEuPathDB" id="HostDB:geneid_386577"/>
<dbReference type="eggNOG" id="KOG3645">
    <property type="taxonomic scope" value="Eukaryota"/>
</dbReference>
<dbReference type="InParanoid" id="P26152"/>
<dbReference type="OrthoDB" id="5975154at2759"/>
<dbReference type="PhylomeDB" id="P26152"/>
<dbReference type="PRO" id="PR:P26152"/>
<dbReference type="Proteomes" id="UP000000539">
    <property type="component" value="Unassembled WGS sequence"/>
</dbReference>
<dbReference type="GO" id="GO:0005892">
    <property type="term" value="C:acetylcholine-gated channel complex"/>
    <property type="evidence" value="ECO:0000318"/>
    <property type="project" value="GO_Central"/>
</dbReference>
<dbReference type="GO" id="GO:0043005">
    <property type="term" value="C:neuron projection"/>
    <property type="evidence" value="ECO:0000318"/>
    <property type="project" value="GO_Central"/>
</dbReference>
<dbReference type="GO" id="GO:0005886">
    <property type="term" value="C:plasma membrane"/>
    <property type="evidence" value="ECO:0000318"/>
    <property type="project" value="GO_Central"/>
</dbReference>
<dbReference type="GO" id="GO:0045211">
    <property type="term" value="C:postsynaptic membrane"/>
    <property type="evidence" value="ECO:0007669"/>
    <property type="project" value="UniProtKB-KW"/>
</dbReference>
<dbReference type="GO" id="GO:0045202">
    <property type="term" value="C:synapse"/>
    <property type="evidence" value="ECO:0000318"/>
    <property type="project" value="GO_Central"/>
</dbReference>
<dbReference type="GO" id="GO:0022848">
    <property type="term" value="F:acetylcholine-gated monoatomic cation-selective channel activity"/>
    <property type="evidence" value="ECO:0000318"/>
    <property type="project" value="GO_Central"/>
</dbReference>
<dbReference type="GO" id="GO:0004888">
    <property type="term" value="F:transmembrane signaling receptor activity"/>
    <property type="evidence" value="ECO:0007669"/>
    <property type="project" value="InterPro"/>
</dbReference>
<dbReference type="GO" id="GO:0095500">
    <property type="term" value="P:acetylcholine receptor signaling pathway"/>
    <property type="evidence" value="ECO:0000318"/>
    <property type="project" value="GO_Central"/>
</dbReference>
<dbReference type="GO" id="GO:0051899">
    <property type="term" value="P:membrane depolarization"/>
    <property type="evidence" value="ECO:0000318"/>
    <property type="project" value="GO_Central"/>
</dbReference>
<dbReference type="GO" id="GO:0034220">
    <property type="term" value="P:monoatomic ion transmembrane transport"/>
    <property type="evidence" value="ECO:0000318"/>
    <property type="project" value="GO_Central"/>
</dbReference>
<dbReference type="GO" id="GO:0007274">
    <property type="term" value="P:neuromuscular synaptic transmission"/>
    <property type="evidence" value="ECO:0000318"/>
    <property type="project" value="GO_Central"/>
</dbReference>
<dbReference type="GO" id="GO:0035094">
    <property type="term" value="P:response to nicotine"/>
    <property type="evidence" value="ECO:0000318"/>
    <property type="project" value="GO_Central"/>
</dbReference>
<dbReference type="GO" id="GO:0007271">
    <property type="term" value="P:synaptic transmission, cholinergic"/>
    <property type="evidence" value="ECO:0000318"/>
    <property type="project" value="GO_Central"/>
</dbReference>
<dbReference type="CDD" id="cd19018">
    <property type="entry name" value="LGIC_ECD_nAChR_A5"/>
    <property type="match status" value="1"/>
</dbReference>
<dbReference type="CDD" id="cd19064">
    <property type="entry name" value="LGIC_TM_nAChR"/>
    <property type="match status" value="1"/>
</dbReference>
<dbReference type="FunFam" id="1.20.58.390:FF:000041">
    <property type="entry name" value="Neuronal acetylcholine receptor subunit alpha-5"/>
    <property type="match status" value="1"/>
</dbReference>
<dbReference type="FunFam" id="2.70.170.10:FF:000005">
    <property type="entry name" value="Neuronal nicotinic acetylcholine receptor alpha4 subunit"/>
    <property type="match status" value="1"/>
</dbReference>
<dbReference type="FunFam" id="1.20.58.390:FF:000001">
    <property type="entry name" value="Neuronal nicotinic acetylcholine receptor subunit 3"/>
    <property type="match status" value="1"/>
</dbReference>
<dbReference type="Gene3D" id="2.70.170.10">
    <property type="entry name" value="Neurotransmitter-gated ion-channel ligand-binding domain"/>
    <property type="match status" value="1"/>
</dbReference>
<dbReference type="Gene3D" id="1.20.58.390">
    <property type="entry name" value="Neurotransmitter-gated ion-channel transmembrane domain"/>
    <property type="match status" value="2"/>
</dbReference>
<dbReference type="InterPro" id="IPR006202">
    <property type="entry name" value="Neur_chan_lig-bd"/>
</dbReference>
<dbReference type="InterPro" id="IPR036734">
    <property type="entry name" value="Neur_chan_lig-bd_sf"/>
</dbReference>
<dbReference type="InterPro" id="IPR006201">
    <property type="entry name" value="Neur_channel"/>
</dbReference>
<dbReference type="InterPro" id="IPR036719">
    <property type="entry name" value="Neuro-gated_channel_TM_sf"/>
</dbReference>
<dbReference type="InterPro" id="IPR038050">
    <property type="entry name" value="Neuro_actylchol_rec"/>
</dbReference>
<dbReference type="InterPro" id="IPR006029">
    <property type="entry name" value="Neurotrans-gated_channel_TM"/>
</dbReference>
<dbReference type="InterPro" id="IPR018000">
    <property type="entry name" value="Neurotransmitter_ion_chnl_CS"/>
</dbReference>
<dbReference type="InterPro" id="IPR002394">
    <property type="entry name" value="Nicotinic_acetylcholine_rcpt"/>
</dbReference>
<dbReference type="NCBIfam" id="TIGR00860">
    <property type="entry name" value="LIC"/>
    <property type="match status" value="1"/>
</dbReference>
<dbReference type="PANTHER" id="PTHR18945">
    <property type="entry name" value="NEUROTRANSMITTER GATED ION CHANNEL"/>
    <property type="match status" value="1"/>
</dbReference>
<dbReference type="Pfam" id="PF02931">
    <property type="entry name" value="Neur_chan_LBD"/>
    <property type="match status" value="1"/>
</dbReference>
<dbReference type="Pfam" id="PF02932">
    <property type="entry name" value="Neur_chan_memb"/>
    <property type="match status" value="2"/>
</dbReference>
<dbReference type="PRINTS" id="PR00254">
    <property type="entry name" value="NICOTINICR"/>
</dbReference>
<dbReference type="PRINTS" id="PR00252">
    <property type="entry name" value="NRIONCHANNEL"/>
</dbReference>
<dbReference type="SUPFAM" id="SSF90112">
    <property type="entry name" value="Neurotransmitter-gated ion-channel transmembrane pore"/>
    <property type="match status" value="1"/>
</dbReference>
<dbReference type="SUPFAM" id="SSF63712">
    <property type="entry name" value="Nicotinic receptor ligand binding domain-like"/>
    <property type="match status" value="1"/>
</dbReference>
<dbReference type="PROSITE" id="PS00236">
    <property type="entry name" value="NEUROTR_ION_CHANNEL"/>
    <property type="match status" value="1"/>
</dbReference>
<sequence length="454" mass="51957">MPLRARSRKPGAGPAARAPQAGVSEPSFVAKSEDRLFKHLFEDYQRWVRPVEHLNDTIKIKFGLAISQLVDVDEKNQLMTTNVWLKQEWIHVKLRWNPEDYAGITSIRVPSDSIWIPDIVLYDNADGRFEGTSTKTVVKYDGTIAWTPPVNYKSSCTIDVTFFPFDLQNCSMKFGSWTYDGSQVDIILEDYEVDKRDFFDNGEWEIVTATGSKGNRTDGCCWYPFVTYSFIIRRLPLFYTLFLIIPCIGLSFLTVLVFYLPSNEAEKISLCTSVLVSLTVFLLVIEEIIPSSSKVIPLIGEYLVFTMIFVTLSIVITVFAINIHHRSSSTHNAMAPWVRKIFLHKLPKLLCMRSHVDRYFAQKEEKGNMSGSESSRNTLEAALDSIRYITRHVMKENEVREVVEDWKFIAQVLDRMFLWAFLLVSIIGSLVLFIPVIHKWASIIVPVHIGSTNT</sequence>
<name>ACHA5_CHICK</name>
<organism>
    <name type="scientific">Gallus gallus</name>
    <name type="common">Chicken</name>
    <dbReference type="NCBI Taxonomy" id="9031"/>
    <lineage>
        <taxon>Eukaryota</taxon>
        <taxon>Metazoa</taxon>
        <taxon>Chordata</taxon>
        <taxon>Craniata</taxon>
        <taxon>Vertebrata</taxon>
        <taxon>Euteleostomi</taxon>
        <taxon>Archelosauria</taxon>
        <taxon>Archosauria</taxon>
        <taxon>Dinosauria</taxon>
        <taxon>Saurischia</taxon>
        <taxon>Theropoda</taxon>
        <taxon>Coelurosauria</taxon>
        <taxon>Aves</taxon>
        <taxon>Neognathae</taxon>
        <taxon>Galloanserae</taxon>
        <taxon>Galliformes</taxon>
        <taxon>Phasianidae</taxon>
        <taxon>Phasianinae</taxon>
        <taxon>Gallus</taxon>
    </lineage>
</organism>
<protein>
    <recommendedName>
        <fullName>Neuronal acetylcholine receptor subunit alpha-5</fullName>
    </recommendedName>
</protein>
<feature type="signal peptide" evidence="5">
    <location>
        <begin position="1"/>
        <end position="29"/>
    </location>
</feature>
<feature type="chain" id="PRO_0000000359" description="Neuronal acetylcholine receptor subunit alpha-5">
    <location>
        <begin position="30"/>
        <end position="454"/>
    </location>
</feature>
<feature type="topological domain" description="Extracellular" evidence="5">
    <location>
        <begin position="30"/>
        <end position="240"/>
    </location>
</feature>
<feature type="transmembrane region" description="Helical" evidence="5">
    <location>
        <begin position="241"/>
        <end position="261"/>
    </location>
</feature>
<feature type="transmembrane region" description="Helical" evidence="5">
    <location>
        <begin position="270"/>
        <end position="290"/>
    </location>
</feature>
<feature type="transmembrane region" description="Helical" evidence="5">
    <location>
        <begin position="303"/>
        <end position="323"/>
    </location>
</feature>
<feature type="topological domain" description="Cytoplasmic" evidence="5">
    <location>
        <begin position="324"/>
        <end position="416"/>
    </location>
</feature>
<feature type="transmembrane region" description="Helical" evidence="5">
    <location>
        <begin position="417"/>
        <end position="437"/>
    </location>
</feature>
<feature type="topological domain" description="Extracellular" evidence="5">
    <location>
        <begin position="438"/>
        <end position="454"/>
    </location>
</feature>
<feature type="region of interest" description="Disordered" evidence="6">
    <location>
        <begin position="1"/>
        <end position="26"/>
    </location>
</feature>
<feature type="compositionally biased region" description="Low complexity" evidence="6">
    <location>
        <begin position="10"/>
        <end position="22"/>
    </location>
</feature>
<feature type="glycosylation site" description="N-linked (GlcNAc...) asparagine" evidence="5">
    <location>
        <position position="55"/>
    </location>
</feature>
<feature type="glycosylation site" description="N-linked (GlcNAc...) asparagine" evidence="5">
    <location>
        <position position="169"/>
    </location>
</feature>
<feature type="glycosylation site" description="N-linked (GlcNAc...) asparagine" evidence="5">
    <location>
        <position position="215"/>
    </location>
</feature>
<feature type="disulfide bond" evidence="3">
    <location>
        <begin position="156"/>
        <end position="170"/>
    </location>
</feature>
<feature type="disulfide bond" description="Associated with receptor activation" evidence="3">
    <location>
        <begin position="220"/>
        <end position="221"/>
    </location>
</feature>
<accession>P26152</accession>
<proteinExistence type="evidence at protein level"/>
<keyword id="KW-1003">Cell membrane</keyword>
<keyword id="KW-1015">Disulfide bond</keyword>
<keyword id="KW-0325">Glycoprotein</keyword>
<keyword id="KW-0407">Ion channel</keyword>
<keyword id="KW-0406">Ion transport</keyword>
<keyword id="KW-1071">Ligand-gated ion channel</keyword>
<keyword id="KW-0472">Membrane</keyword>
<keyword id="KW-0675">Receptor</keyword>
<keyword id="KW-1185">Reference proteome</keyword>
<keyword id="KW-0732">Signal</keyword>
<keyword id="KW-0770">Synapse</keyword>
<keyword id="KW-0812">Transmembrane</keyword>
<keyword id="KW-1133">Transmembrane helix</keyword>
<keyword id="KW-0813">Transport</keyword>
<gene>
    <name type="primary">CHRNA5</name>
</gene>